<proteinExistence type="evidence at protein level"/>
<organism>
    <name type="scientific">Mus musculus</name>
    <name type="common">Mouse</name>
    <dbReference type="NCBI Taxonomy" id="10090"/>
    <lineage>
        <taxon>Eukaryota</taxon>
        <taxon>Metazoa</taxon>
        <taxon>Chordata</taxon>
        <taxon>Craniata</taxon>
        <taxon>Vertebrata</taxon>
        <taxon>Euteleostomi</taxon>
        <taxon>Mammalia</taxon>
        <taxon>Eutheria</taxon>
        <taxon>Euarchontoglires</taxon>
        <taxon>Glires</taxon>
        <taxon>Rodentia</taxon>
        <taxon>Myomorpha</taxon>
        <taxon>Muroidea</taxon>
        <taxon>Muridae</taxon>
        <taxon>Murinae</taxon>
        <taxon>Mus</taxon>
        <taxon>Mus</taxon>
    </lineage>
</organism>
<accession>Q64345</accession>
<accession>Q99L62</accession>
<dbReference type="EMBL" id="U43086">
    <property type="protein sequence ID" value="AAC52627.1"/>
    <property type="molecule type" value="Genomic_DNA"/>
</dbReference>
<dbReference type="EMBL" id="L32974">
    <property type="protein sequence ID" value="AAA39329.1"/>
    <property type="molecule type" value="mRNA"/>
</dbReference>
<dbReference type="EMBL" id="BC003804">
    <property type="protein sequence ID" value="AAH03804.1"/>
    <property type="molecule type" value="mRNA"/>
</dbReference>
<dbReference type="CCDS" id="CCDS29762.1"/>
<dbReference type="PIR" id="S71356">
    <property type="entry name" value="S71356"/>
</dbReference>
<dbReference type="RefSeq" id="NP_034631.1">
    <property type="nucleotide sequence ID" value="NM_010501.2"/>
</dbReference>
<dbReference type="PDB" id="9MK9">
    <property type="method" value="EM"/>
    <property type="resolution" value="3.22 A"/>
    <property type="chains" value="B=8-389"/>
</dbReference>
<dbReference type="PDBsum" id="9MK9"/>
<dbReference type="EMDB" id="EMD-48323"/>
<dbReference type="SMR" id="Q64345"/>
<dbReference type="BioGRID" id="200527">
    <property type="interactions" value="12"/>
</dbReference>
<dbReference type="FunCoup" id="Q64345">
    <property type="interactions" value="345"/>
</dbReference>
<dbReference type="IntAct" id="Q64345">
    <property type="interactions" value="1"/>
</dbReference>
<dbReference type="STRING" id="10090.ENSMUSP00000099889"/>
<dbReference type="iPTMnet" id="Q64345"/>
<dbReference type="PhosphoSitePlus" id="Q64345"/>
<dbReference type="PaxDb" id="10090-ENSMUSP00000099889"/>
<dbReference type="ProteomicsDB" id="266951"/>
<dbReference type="DNASU" id="15959"/>
<dbReference type="Ensembl" id="ENSMUST00000102825.4">
    <property type="protein sequence ID" value="ENSMUSP00000099889.4"/>
    <property type="gene ID" value="ENSMUSG00000074896.4"/>
</dbReference>
<dbReference type="GeneID" id="15959"/>
<dbReference type="KEGG" id="mmu:15959"/>
<dbReference type="UCSC" id="uc008hgo.1">
    <property type="organism name" value="mouse"/>
</dbReference>
<dbReference type="AGR" id="MGI:1101055"/>
<dbReference type="CTD" id="3437"/>
<dbReference type="MGI" id="MGI:1101055">
    <property type="gene designation" value="Ifit3"/>
</dbReference>
<dbReference type="VEuPathDB" id="HostDB:ENSMUSG00000074896"/>
<dbReference type="eggNOG" id="KOG1124">
    <property type="taxonomic scope" value="Eukaryota"/>
</dbReference>
<dbReference type="GeneTree" id="ENSGT00950000182946"/>
<dbReference type="HOGENOM" id="CLU_043482_0_0_1"/>
<dbReference type="InParanoid" id="Q64345"/>
<dbReference type="OMA" id="YYYMERF"/>
<dbReference type="OrthoDB" id="10043504at2759"/>
<dbReference type="PhylomeDB" id="Q64345"/>
<dbReference type="TreeFam" id="TF342671"/>
<dbReference type="BioGRID-ORCS" id="15959">
    <property type="hits" value="2 hits in 46 CRISPR screens"/>
</dbReference>
<dbReference type="ChiTaRS" id="Ifit3">
    <property type="organism name" value="mouse"/>
</dbReference>
<dbReference type="PRO" id="PR:Q64345"/>
<dbReference type="Proteomes" id="UP000000589">
    <property type="component" value="Chromosome 19"/>
</dbReference>
<dbReference type="RNAct" id="Q64345">
    <property type="molecule type" value="protein"/>
</dbReference>
<dbReference type="Bgee" id="ENSMUSG00000074896">
    <property type="expression patterns" value="Expressed in right kidney and 55 other cell types or tissues"/>
</dbReference>
<dbReference type="ExpressionAtlas" id="Q64345">
    <property type="expression patterns" value="baseline and differential"/>
</dbReference>
<dbReference type="GO" id="GO:0005737">
    <property type="term" value="C:cytoplasm"/>
    <property type="evidence" value="ECO:0000250"/>
    <property type="project" value="UniProtKB"/>
</dbReference>
<dbReference type="GO" id="GO:0005739">
    <property type="term" value="C:mitochondrion"/>
    <property type="evidence" value="ECO:0000250"/>
    <property type="project" value="UniProtKB"/>
</dbReference>
<dbReference type="GO" id="GO:0035458">
    <property type="term" value="P:cellular response to interferon-beta"/>
    <property type="evidence" value="ECO:0000314"/>
    <property type="project" value="MGI"/>
</dbReference>
<dbReference type="GO" id="GO:0051607">
    <property type="term" value="P:defense response to virus"/>
    <property type="evidence" value="ECO:0007669"/>
    <property type="project" value="UniProtKB-KW"/>
</dbReference>
<dbReference type="GO" id="GO:0045087">
    <property type="term" value="P:innate immune response"/>
    <property type="evidence" value="ECO:0007669"/>
    <property type="project" value="UniProtKB-KW"/>
</dbReference>
<dbReference type="GO" id="GO:0043066">
    <property type="term" value="P:negative regulation of apoptotic process"/>
    <property type="evidence" value="ECO:0000250"/>
    <property type="project" value="UniProtKB"/>
</dbReference>
<dbReference type="GO" id="GO:0008285">
    <property type="term" value="P:negative regulation of cell population proliferation"/>
    <property type="evidence" value="ECO:0000250"/>
    <property type="project" value="UniProtKB"/>
</dbReference>
<dbReference type="GO" id="GO:0009617">
    <property type="term" value="P:response to bacterium"/>
    <property type="evidence" value="ECO:0000270"/>
    <property type="project" value="MGI"/>
</dbReference>
<dbReference type="GO" id="GO:0035634">
    <property type="term" value="P:response to stilbenoid"/>
    <property type="evidence" value="ECO:0000270"/>
    <property type="project" value="UniProtKB"/>
</dbReference>
<dbReference type="GO" id="GO:0009615">
    <property type="term" value="P:response to virus"/>
    <property type="evidence" value="ECO:0000250"/>
    <property type="project" value="UniProtKB"/>
</dbReference>
<dbReference type="FunFam" id="1.25.40.10:FF:001451">
    <property type="entry name" value="Interferon-induced protein with tetratricopeptide repeats 3"/>
    <property type="match status" value="1"/>
</dbReference>
<dbReference type="Gene3D" id="1.25.40.10">
    <property type="entry name" value="Tetratricopeptide repeat domain"/>
    <property type="match status" value="3"/>
</dbReference>
<dbReference type="InterPro" id="IPR011990">
    <property type="entry name" value="TPR-like_helical_dom_sf"/>
</dbReference>
<dbReference type="InterPro" id="IPR019734">
    <property type="entry name" value="TPR_rpt"/>
</dbReference>
<dbReference type="PANTHER" id="PTHR10271">
    <property type="entry name" value="INTERFERON-INDUCED PROTEIN WITH TETRATRICOPEPTIDE REPEATS"/>
    <property type="match status" value="1"/>
</dbReference>
<dbReference type="PANTHER" id="PTHR10271:SF3">
    <property type="entry name" value="INTERFERON-INDUCED PROTEIN WITH TETRATRICOPEPTIDE REPEATS 3"/>
    <property type="match status" value="1"/>
</dbReference>
<dbReference type="Pfam" id="PF14559">
    <property type="entry name" value="TPR_19"/>
    <property type="match status" value="1"/>
</dbReference>
<dbReference type="Pfam" id="PF13181">
    <property type="entry name" value="TPR_8"/>
    <property type="match status" value="2"/>
</dbReference>
<dbReference type="SMART" id="SM00028">
    <property type="entry name" value="TPR"/>
    <property type="match status" value="5"/>
</dbReference>
<dbReference type="SUPFAM" id="SSF48452">
    <property type="entry name" value="TPR-like"/>
    <property type="match status" value="2"/>
</dbReference>
<dbReference type="PROSITE" id="PS50293">
    <property type="entry name" value="TPR_REGION"/>
    <property type="match status" value="1"/>
</dbReference>
<reference key="1">
    <citation type="journal article" date="1996" name="Arch. Biochem. Biophys.">
        <title>The glucocorticoid attenuated response genes GARG-16, GARG-39, and GARG-49/IRG2 encode inducible proteins containing multiple tetratricopeptide repeat domains.</title>
        <authorList>
            <person name="Smith J.B."/>
            <person name="Herschman H.R."/>
        </authorList>
    </citation>
    <scope>NUCLEOTIDE SEQUENCE [GENOMIC DNA]</scope>
</reference>
<reference key="2">
    <citation type="journal article" date="1994" name="J. Immunol.">
        <title>Molecular cloning and characterization of a murine LPS-inducible cDNA.</title>
        <authorList>
            <person name="Lee C.G.G."/>
            <person name="Demarquoy J."/>
            <person name="Jackson M.J."/>
            <person name="O'Brien W.E."/>
        </authorList>
    </citation>
    <scope>NUCLEOTIDE SEQUENCE [MRNA]</scope>
    <source>
        <strain>BALB/cJ</strain>
    </source>
</reference>
<reference key="3">
    <citation type="journal article" date="2004" name="Genome Res.">
        <title>The status, quality, and expansion of the NIH full-length cDNA project: the Mammalian Gene Collection (MGC).</title>
        <authorList>
            <consortium name="The MGC Project Team"/>
        </authorList>
    </citation>
    <scope>NUCLEOTIDE SEQUENCE [LARGE SCALE MRNA]</scope>
</reference>
<reference key="4">
    <citation type="journal article" date="2010" name="Cell">
        <title>A tissue-specific atlas of mouse protein phosphorylation and expression.</title>
        <authorList>
            <person name="Huttlin E.L."/>
            <person name="Jedrychowski M.P."/>
            <person name="Elias J.E."/>
            <person name="Goswami T."/>
            <person name="Rad R."/>
            <person name="Beausoleil S.A."/>
            <person name="Villen J."/>
            <person name="Haas W."/>
            <person name="Sowa M.E."/>
            <person name="Gygi S.P."/>
        </authorList>
    </citation>
    <scope>IDENTIFICATION BY MASS SPECTROMETRY [LARGE SCALE ANALYSIS]</scope>
    <source>
        <tissue>Spleen</tissue>
    </source>
</reference>
<reference key="5">
    <citation type="journal article" date="2011" name="J. Interferon Cytokine Res.">
        <title>The ISG56/IFIT1 gene family.</title>
        <authorList>
            <person name="Fensterl V."/>
            <person name="Sen G.C."/>
        </authorList>
    </citation>
    <scope>REVIEW</scope>
</reference>
<reference key="6">
    <citation type="journal article" date="2020" name="Microorganisms">
        <title>Transcriptome Analysis of Testes and Uterus: Reproductive Dysfunction Induced by Toxoplasma gondii in Mice.</title>
        <authorList>
            <person name="Wang J."/>
            <person name="Liu T."/>
            <person name="Mahmmod Y.S."/>
            <person name="Yang Z."/>
            <person name="Tan J."/>
            <person name="Ren Z."/>
            <person name="Zhang X."/>
            <person name="Yang X."/>
            <person name="Zhang X.X."/>
            <person name="Yuan Z.G."/>
        </authorList>
    </citation>
    <scope>INDUCTION BY T.GONDII INFECTION</scope>
</reference>
<protein>
    <recommendedName>
        <fullName>Interferon-induced protein with tetratricopeptide repeats 3</fullName>
        <shortName>IFIT-3</shortName>
    </recommendedName>
    <alternativeName>
        <fullName>Glucocorticoid-attenuated response gene 49 protein</fullName>
        <shortName>GARG-49</shortName>
        <shortName>P49</shortName>
    </alternativeName>
    <alternativeName>
        <fullName>IRG2</fullName>
    </alternativeName>
</protein>
<gene>
    <name type="primary">Ifit3</name>
    <name type="synonym">Garg49</name>
    <name type="synonym">Ifi49</name>
    <name type="synonym">Isg49</name>
</gene>
<name>IFIT3_MOUSE</name>
<keyword id="KW-0002">3D-structure</keyword>
<keyword id="KW-0051">Antiviral defense</keyword>
<keyword id="KW-0963">Cytoplasm</keyword>
<keyword id="KW-0391">Immunity</keyword>
<keyword id="KW-0399">Innate immunity</keyword>
<keyword id="KW-0496">Mitochondrion</keyword>
<keyword id="KW-1185">Reference proteome</keyword>
<keyword id="KW-0677">Repeat</keyword>
<keyword id="KW-0802">TPR repeat</keyword>
<evidence type="ECO:0000250" key="1"/>
<evidence type="ECO:0000250" key="2">
    <source>
        <dbReference type="UniProtKB" id="O14879"/>
    </source>
</evidence>
<evidence type="ECO:0000269" key="3">
    <source>
    </source>
</evidence>
<evidence type="ECO:0000305" key="4"/>
<feature type="chain" id="PRO_0000106350" description="Interferon-induced protein with tetratricopeptide repeats 3">
    <location>
        <begin position="1"/>
        <end position="403"/>
    </location>
</feature>
<feature type="repeat" description="TPR 1">
    <location>
        <begin position="94"/>
        <end position="127"/>
    </location>
</feature>
<feature type="repeat" description="TPR 2">
    <location>
        <begin position="136"/>
        <end position="169"/>
    </location>
</feature>
<feature type="repeat" description="TPR 3">
    <location>
        <begin position="172"/>
        <end position="206"/>
    </location>
</feature>
<feature type="repeat" description="TPR 4">
    <location>
        <begin position="241"/>
        <end position="274"/>
    </location>
</feature>
<feature type="sequence conflict" description="In Ref. 3; AAH03804." evidence="4" ref="3">
    <original>C</original>
    <variation>Y</variation>
    <location>
        <position position="158"/>
    </location>
</feature>
<comment type="function">
    <text evidence="1">IFN-induced antiviral protein which acts as an inhibitor of cellular as well as viral processes, cell migration, proliferation, signaling, and viral replication. Enhances MAVS-mediated host antiviral responses by serving as an adapter bridging TBK1 to MAVS which leads to the activation of TBK1 and phosphorylation of IRF3 and phosphorylated IRF3 translocates into nucleus to promote antiviral gene transcription. Exhibits an antiproliferative activity via the up-regulation of cell cycle negative regulators CDKN1A/p21 and CDKN1B/p27. Normally, CDKN1B/p27 turnover is regulated by COPS5, which binds CDKN1B/p27 in the nucleus and exports it to the cytoplasm for ubiquitin-dependent degradation. IFIT3 sequesters COPS5 in the cytoplasm, thereby increasing nuclear CDKN1B/p27 protein levels. Up-regulates CDKN1A/p21 by down-regulating MYC, a repressor of CDKN1A/p21. Can negatively regulate the apoptotic effects of IFIT2 (By similarity).</text>
</comment>
<comment type="subunit">
    <text evidence="2">Component of an interferon-dependent multiprotein complex, at least composed of IFIT1, IFIT2 and IFIT3 (By similarity). Interacts with IFIT1 and IFIT2 (By similarity). Interacts (via N-terminus) with MAVS, TBK1, TRAF6 and RIGI (By similarity). Interacts with COPS5 (By similarity).</text>
</comment>
<comment type="subcellular location">
    <subcellularLocation>
        <location evidence="2">Cytoplasm</location>
    </subcellularLocation>
    <subcellularLocation>
        <location evidence="2">Mitochondrion</location>
    </subcellularLocation>
</comment>
<comment type="induction">
    <text evidence="3">Induced by T.gondii infection in the testes and uterus.</text>
</comment>
<comment type="similarity">
    <text evidence="4">Belongs to the IFIT family.</text>
</comment>
<sequence>MSEVNRESLEAILPQLKCHFTWNLFREGSMSSHMEDRVCNQVEHLNSEEKATMYDLLAYIKHLDGESKAALECLGQAEDLRKSEHNDQSEIRRLVTWGNYAWIYYHMGRLSEAQAYVDKVRQVCQKFANPYSMECPELECEEGWTRLKCGRNERAKMCFEKALEEKPKDPECSSGMAIAMFRLEEKPEKQFSVDALKQAMELNPQNQYLKVLLALKLLRMGEEAEGERLIKDALGKAPNQTDVLQKAAQFYKKKGNLDRAIELLGKALRSTVNNSPLYSLVMCRYREILEQLQNKGDADSSERRQRMAELRRLTMEFMQKTLQRRRSPLNSYSDLIDFPEVERCYQMVISKESPDVEEEDLYERYCNLQEYHRKSEDLAALECLLQFPRNERSIEKEEVKEQT</sequence>